<name>THIG_ECOL5</name>
<organism>
    <name type="scientific">Escherichia coli O6:K15:H31 (strain 536 / UPEC)</name>
    <dbReference type="NCBI Taxonomy" id="362663"/>
    <lineage>
        <taxon>Bacteria</taxon>
        <taxon>Pseudomonadati</taxon>
        <taxon>Pseudomonadota</taxon>
        <taxon>Gammaproteobacteria</taxon>
        <taxon>Enterobacterales</taxon>
        <taxon>Enterobacteriaceae</taxon>
        <taxon>Escherichia</taxon>
    </lineage>
</organism>
<reference key="1">
    <citation type="journal article" date="2006" name="Mol. Microbiol.">
        <title>Role of pathogenicity island-associated integrases in the genome plasticity of uropathogenic Escherichia coli strain 536.</title>
        <authorList>
            <person name="Hochhut B."/>
            <person name="Wilde C."/>
            <person name="Balling G."/>
            <person name="Middendorf B."/>
            <person name="Dobrindt U."/>
            <person name="Brzuszkiewicz E."/>
            <person name="Gottschalk G."/>
            <person name="Carniel E."/>
            <person name="Hacker J."/>
        </authorList>
    </citation>
    <scope>NUCLEOTIDE SEQUENCE [LARGE SCALE GENOMIC DNA]</scope>
    <source>
        <strain>536 / UPEC</strain>
    </source>
</reference>
<comment type="function">
    <text evidence="1">Catalyzes the rearrangement of 1-deoxy-D-xylulose 5-phosphate (DXP) to produce the thiazole phosphate moiety of thiamine. Sulfur is provided by the thiocarboxylate moiety of the carrier protein ThiS. In vitro, sulfur can be provided by H(2)S.</text>
</comment>
<comment type="catalytic activity">
    <reaction evidence="1">
        <text>[ThiS sulfur-carrier protein]-C-terminal-Gly-aminoethanethioate + 2-iminoacetate + 1-deoxy-D-xylulose 5-phosphate = [ThiS sulfur-carrier protein]-C-terminal Gly-Gly + 2-[(2R,5Z)-2-carboxy-4-methylthiazol-5(2H)-ylidene]ethyl phosphate + 2 H2O + H(+)</text>
        <dbReference type="Rhea" id="RHEA:26297"/>
        <dbReference type="Rhea" id="RHEA-COMP:12909"/>
        <dbReference type="Rhea" id="RHEA-COMP:19908"/>
        <dbReference type="ChEBI" id="CHEBI:15377"/>
        <dbReference type="ChEBI" id="CHEBI:15378"/>
        <dbReference type="ChEBI" id="CHEBI:57792"/>
        <dbReference type="ChEBI" id="CHEBI:62899"/>
        <dbReference type="ChEBI" id="CHEBI:77846"/>
        <dbReference type="ChEBI" id="CHEBI:90778"/>
        <dbReference type="ChEBI" id="CHEBI:232372"/>
        <dbReference type="EC" id="2.8.1.10"/>
    </reaction>
</comment>
<comment type="pathway">
    <text evidence="1">Cofactor biosynthesis; thiamine diphosphate biosynthesis.</text>
</comment>
<comment type="subunit">
    <text evidence="1">Homotetramer. Forms heterodimers with either ThiH or ThiS.</text>
</comment>
<comment type="subcellular location">
    <subcellularLocation>
        <location evidence="1">Cytoplasm</location>
    </subcellularLocation>
</comment>
<comment type="similarity">
    <text evidence="1">Belongs to the ThiG family.</text>
</comment>
<protein>
    <recommendedName>
        <fullName evidence="1">Thiazole synthase</fullName>
        <ecNumber evidence="1">2.8.1.10</ecNumber>
    </recommendedName>
</protein>
<dbReference type="EC" id="2.8.1.10" evidence="1"/>
<dbReference type="EMBL" id="CP000247">
    <property type="protein sequence ID" value="ABG72154.1"/>
    <property type="molecule type" value="Genomic_DNA"/>
</dbReference>
<dbReference type="RefSeq" id="WP_000902344.1">
    <property type="nucleotide sequence ID" value="NC_008253.1"/>
</dbReference>
<dbReference type="SMR" id="Q0TA75"/>
<dbReference type="KEGG" id="ecp:ECP_4203"/>
<dbReference type="HOGENOM" id="CLU_062233_1_0_6"/>
<dbReference type="UniPathway" id="UPA00060"/>
<dbReference type="Proteomes" id="UP000009182">
    <property type="component" value="Chromosome"/>
</dbReference>
<dbReference type="GO" id="GO:0005737">
    <property type="term" value="C:cytoplasm"/>
    <property type="evidence" value="ECO:0007669"/>
    <property type="project" value="UniProtKB-SubCell"/>
</dbReference>
<dbReference type="GO" id="GO:1990107">
    <property type="term" value="F:thiazole synthase activity"/>
    <property type="evidence" value="ECO:0007669"/>
    <property type="project" value="UniProtKB-EC"/>
</dbReference>
<dbReference type="GO" id="GO:0009229">
    <property type="term" value="P:thiamine diphosphate biosynthetic process"/>
    <property type="evidence" value="ECO:0007669"/>
    <property type="project" value="UniProtKB-UniRule"/>
</dbReference>
<dbReference type="CDD" id="cd04728">
    <property type="entry name" value="ThiG"/>
    <property type="match status" value="1"/>
</dbReference>
<dbReference type="FunFam" id="3.20.20.70:FF:000049">
    <property type="entry name" value="Thiazole synthase"/>
    <property type="match status" value="1"/>
</dbReference>
<dbReference type="Gene3D" id="3.20.20.70">
    <property type="entry name" value="Aldolase class I"/>
    <property type="match status" value="1"/>
</dbReference>
<dbReference type="HAMAP" id="MF_00443">
    <property type="entry name" value="ThiG"/>
    <property type="match status" value="1"/>
</dbReference>
<dbReference type="InterPro" id="IPR013785">
    <property type="entry name" value="Aldolase_TIM"/>
</dbReference>
<dbReference type="InterPro" id="IPR033983">
    <property type="entry name" value="Thiazole_synthase_ThiG"/>
</dbReference>
<dbReference type="InterPro" id="IPR008867">
    <property type="entry name" value="ThiG"/>
</dbReference>
<dbReference type="PANTHER" id="PTHR34266">
    <property type="entry name" value="THIAZOLE SYNTHASE"/>
    <property type="match status" value="1"/>
</dbReference>
<dbReference type="PANTHER" id="PTHR34266:SF2">
    <property type="entry name" value="THIAZOLE SYNTHASE"/>
    <property type="match status" value="1"/>
</dbReference>
<dbReference type="Pfam" id="PF05690">
    <property type="entry name" value="ThiG"/>
    <property type="match status" value="1"/>
</dbReference>
<dbReference type="SUPFAM" id="SSF110399">
    <property type="entry name" value="ThiG-like"/>
    <property type="match status" value="1"/>
</dbReference>
<gene>
    <name evidence="1" type="primary">thiG</name>
    <name type="ordered locus">ECP_4203</name>
</gene>
<sequence>MLHIADKTFASHLFTGTGKFASSQLMVEAIRACGSQLVTLAMKRVDLRQHNDAILEPLIAAGVTLLPNTSGAKTAEEAIFAAHLAREALGTNWLKLEIHPDARWLLPDPIETLKAAETLVQQGFIVLPYCGADPVLCKRLEEVGCAAVMPLGAPIGSNQGLETRAMLEIIIQQATVPVVVDAGIGVPSHAAQALEMGADAVLVNTAIAVADDPVNMAKAFRLAVEAGLLARQSGPGSRSHFAHATSPLTGFLEASA</sequence>
<keyword id="KW-0963">Cytoplasm</keyword>
<keyword id="KW-0704">Schiff base</keyword>
<keyword id="KW-0784">Thiamine biosynthesis</keyword>
<keyword id="KW-0808">Transferase</keyword>
<evidence type="ECO:0000255" key="1">
    <source>
        <dbReference type="HAMAP-Rule" id="MF_00443"/>
    </source>
</evidence>
<accession>Q0TA75</accession>
<feature type="chain" id="PRO_1000026006" description="Thiazole synthase">
    <location>
        <begin position="1"/>
        <end position="256"/>
    </location>
</feature>
<feature type="active site" description="Schiff-base intermediate with DXP" evidence="1">
    <location>
        <position position="95"/>
    </location>
</feature>
<feature type="binding site" evidence="1">
    <location>
        <position position="156"/>
    </location>
    <ligand>
        <name>1-deoxy-D-xylulose 5-phosphate</name>
        <dbReference type="ChEBI" id="CHEBI:57792"/>
    </ligand>
</feature>
<feature type="binding site" evidence="1">
    <location>
        <begin position="182"/>
        <end position="183"/>
    </location>
    <ligand>
        <name>1-deoxy-D-xylulose 5-phosphate</name>
        <dbReference type="ChEBI" id="CHEBI:57792"/>
    </ligand>
</feature>
<feature type="binding site" evidence="1">
    <location>
        <begin position="204"/>
        <end position="205"/>
    </location>
    <ligand>
        <name>1-deoxy-D-xylulose 5-phosphate</name>
        <dbReference type="ChEBI" id="CHEBI:57792"/>
    </ligand>
</feature>
<proteinExistence type="inferred from homology"/>